<organism>
    <name type="scientific">Chlorobium luteolum (strain DSM 273 / BCRC 81028 / 2530)</name>
    <name type="common">Pelodictyon luteolum</name>
    <dbReference type="NCBI Taxonomy" id="319225"/>
    <lineage>
        <taxon>Bacteria</taxon>
        <taxon>Pseudomonadati</taxon>
        <taxon>Chlorobiota</taxon>
        <taxon>Chlorobiia</taxon>
        <taxon>Chlorobiales</taxon>
        <taxon>Chlorobiaceae</taxon>
        <taxon>Chlorobium/Pelodictyon group</taxon>
        <taxon>Pelodictyon</taxon>
    </lineage>
</organism>
<name>GCSPA_CHLL3</name>
<evidence type="ECO:0000255" key="1">
    <source>
        <dbReference type="HAMAP-Rule" id="MF_00712"/>
    </source>
</evidence>
<proteinExistence type="inferred from homology"/>
<gene>
    <name evidence="1" type="primary">gcvPA</name>
    <name type="ordered locus">Plut_1614</name>
</gene>
<accession>Q3B2G3</accession>
<dbReference type="EC" id="1.4.4.2" evidence="1"/>
<dbReference type="EMBL" id="CP000096">
    <property type="protein sequence ID" value="ABB24468.1"/>
    <property type="molecule type" value="Genomic_DNA"/>
</dbReference>
<dbReference type="RefSeq" id="WP_011358340.1">
    <property type="nucleotide sequence ID" value="NC_007512.1"/>
</dbReference>
<dbReference type="SMR" id="Q3B2G3"/>
<dbReference type="STRING" id="319225.Plut_1614"/>
<dbReference type="KEGG" id="plt:Plut_1614"/>
<dbReference type="eggNOG" id="COG0403">
    <property type="taxonomic scope" value="Bacteria"/>
</dbReference>
<dbReference type="HOGENOM" id="CLU_004620_0_2_10"/>
<dbReference type="OrthoDB" id="9801272at2"/>
<dbReference type="Proteomes" id="UP000002709">
    <property type="component" value="Chromosome"/>
</dbReference>
<dbReference type="GO" id="GO:0004375">
    <property type="term" value="F:glycine dehydrogenase (decarboxylating) activity"/>
    <property type="evidence" value="ECO:0007669"/>
    <property type="project" value="UniProtKB-EC"/>
</dbReference>
<dbReference type="GO" id="GO:0019464">
    <property type="term" value="P:glycine decarboxylation via glycine cleavage system"/>
    <property type="evidence" value="ECO:0007669"/>
    <property type="project" value="UniProtKB-UniRule"/>
</dbReference>
<dbReference type="GO" id="GO:0009116">
    <property type="term" value="P:nucleoside metabolic process"/>
    <property type="evidence" value="ECO:0007669"/>
    <property type="project" value="InterPro"/>
</dbReference>
<dbReference type="CDD" id="cd00613">
    <property type="entry name" value="GDC-P"/>
    <property type="match status" value="1"/>
</dbReference>
<dbReference type="Gene3D" id="3.90.1150.10">
    <property type="entry name" value="Aspartate Aminotransferase, domain 1"/>
    <property type="match status" value="1"/>
</dbReference>
<dbReference type="Gene3D" id="3.40.640.10">
    <property type="entry name" value="Type I PLP-dependent aspartate aminotransferase-like (Major domain)"/>
    <property type="match status" value="1"/>
</dbReference>
<dbReference type="HAMAP" id="MF_00712">
    <property type="entry name" value="GcvPA"/>
    <property type="match status" value="1"/>
</dbReference>
<dbReference type="InterPro" id="IPR023010">
    <property type="entry name" value="GcvPA"/>
</dbReference>
<dbReference type="InterPro" id="IPR049315">
    <property type="entry name" value="GDC-P_N"/>
</dbReference>
<dbReference type="InterPro" id="IPR020581">
    <property type="entry name" value="GDC_P"/>
</dbReference>
<dbReference type="InterPro" id="IPR015424">
    <property type="entry name" value="PyrdxlP-dep_Trfase"/>
</dbReference>
<dbReference type="InterPro" id="IPR015421">
    <property type="entry name" value="PyrdxlP-dep_Trfase_major"/>
</dbReference>
<dbReference type="InterPro" id="IPR015422">
    <property type="entry name" value="PyrdxlP-dep_Trfase_small"/>
</dbReference>
<dbReference type="NCBIfam" id="NF001696">
    <property type="entry name" value="PRK00451.1"/>
    <property type="match status" value="1"/>
</dbReference>
<dbReference type="PANTHER" id="PTHR42806">
    <property type="entry name" value="GLYCINE CLEAVAGE SYSTEM P-PROTEIN"/>
    <property type="match status" value="1"/>
</dbReference>
<dbReference type="PANTHER" id="PTHR42806:SF1">
    <property type="entry name" value="GLYCINE DEHYDROGENASE (DECARBOXYLATING)"/>
    <property type="match status" value="1"/>
</dbReference>
<dbReference type="Pfam" id="PF02347">
    <property type="entry name" value="GDC-P"/>
    <property type="match status" value="1"/>
</dbReference>
<dbReference type="PIRSF" id="PIRSF006815">
    <property type="entry name" value="GcvPA"/>
    <property type="match status" value="1"/>
</dbReference>
<dbReference type="SUPFAM" id="SSF53383">
    <property type="entry name" value="PLP-dependent transferases"/>
    <property type="match status" value="1"/>
</dbReference>
<reference key="1">
    <citation type="submission" date="2005-08" db="EMBL/GenBank/DDBJ databases">
        <title>Complete sequence of Pelodictyon luteolum DSM 273.</title>
        <authorList>
            <consortium name="US DOE Joint Genome Institute"/>
            <person name="Copeland A."/>
            <person name="Lucas S."/>
            <person name="Lapidus A."/>
            <person name="Barry K."/>
            <person name="Detter J.C."/>
            <person name="Glavina T."/>
            <person name="Hammon N."/>
            <person name="Israni S."/>
            <person name="Pitluck S."/>
            <person name="Bryant D."/>
            <person name="Schmutz J."/>
            <person name="Larimer F."/>
            <person name="Land M."/>
            <person name="Kyrpides N."/>
            <person name="Ivanova N."/>
            <person name="Richardson P."/>
        </authorList>
    </citation>
    <scope>NUCLEOTIDE SEQUENCE [LARGE SCALE GENOMIC DNA]</scope>
    <source>
        <strain>DSM 273 / BCRC 81028 / 2530</strain>
    </source>
</reference>
<keyword id="KW-0560">Oxidoreductase</keyword>
<keyword id="KW-1185">Reference proteome</keyword>
<sequence length="444" mass="47680">MPFIVNTDADRESMLHATGVSSFDELIVDIPREVRLNKALELAPAADEMEVRSILESMAAANRSTADYVSFLGGGAYDHFLPSAIKAIVSRSEFYTAYTPYQAEVSQGTLQAIYEYQSLICRLYGMDVTNASMYDGATALAEAVLMAIGVNGRQKVVVAGKLHPWNSSVLKTYLEASDHSAVVQNVVEDGVGSIEVLKGLMDDTVAAVVVQQPNFYGCLEDVEAIGRLAHEHGALFIVSANPVSLGVLEAPGAYGADISVGEGQPLGSSQSFGGPYLGIFSVRQELVRKLPGRLVGMTKDSNGQDGFILTLQTREQHIRREKATSNICSNQALNALQAAVYLSLLGKQGLSEVAGQSLSRAHYLAGRIAAIPGFSIRYNAPFFNEFVVDTPIPPSEVVRKMLEKKVFAGCDLGEFGDEGLLVAVTEKRTKAQLDMFADALGELA</sequence>
<feature type="chain" id="PRO_1000045674" description="Probable glycine dehydrogenase (decarboxylating) subunit 1">
    <location>
        <begin position="1"/>
        <end position="444"/>
    </location>
</feature>
<protein>
    <recommendedName>
        <fullName evidence="1">Probable glycine dehydrogenase (decarboxylating) subunit 1</fullName>
        <ecNumber evidence="1">1.4.4.2</ecNumber>
    </recommendedName>
    <alternativeName>
        <fullName evidence="1">Glycine cleavage system P-protein subunit 1</fullName>
    </alternativeName>
    <alternativeName>
        <fullName evidence="1">Glycine decarboxylase subunit 1</fullName>
    </alternativeName>
    <alternativeName>
        <fullName evidence="1">Glycine dehydrogenase (aminomethyl-transferring) subunit 1</fullName>
    </alternativeName>
</protein>
<comment type="function">
    <text evidence="1">The glycine cleavage system catalyzes the degradation of glycine. The P protein binds the alpha-amino group of glycine through its pyridoxal phosphate cofactor; CO(2) is released and the remaining methylamine moiety is then transferred to the lipoamide cofactor of the H protein.</text>
</comment>
<comment type="catalytic activity">
    <reaction evidence="1">
        <text>N(6)-[(R)-lipoyl]-L-lysyl-[glycine-cleavage complex H protein] + glycine + H(+) = N(6)-[(R)-S(8)-aminomethyldihydrolipoyl]-L-lysyl-[glycine-cleavage complex H protein] + CO2</text>
        <dbReference type="Rhea" id="RHEA:24304"/>
        <dbReference type="Rhea" id="RHEA-COMP:10494"/>
        <dbReference type="Rhea" id="RHEA-COMP:10495"/>
        <dbReference type="ChEBI" id="CHEBI:15378"/>
        <dbReference type="ChEBI" id="CHEBI:16526"/>
        <dbReference type="ChEBI" id="CHEBI:57305"/>
        <dbReference type="ChEBI" id="CHEBI:83099"/>
        <dbReference type="ChEBI" id="CHEBI:83143"/>
        <dbReference type="EC" id="1.4.4.2"/>
    </reaction>
</comment>
<comment type="subunit">
    <text evidence="1">The glycine cleavage system is composed of four proteins: P, T, L and H. In this organism, the P 'protein' is a heterodimer of two subunits.</text>
</comment>
<comment type="similarity">
    <text evidence="1">Belongs to the GcvP family. N-terminal subunit subfamily.</text>
</comment>